<dbReference type="EMBL" id="BX571857">
    <property type="protein sequence ID" value="CAG43949.1"/>
    <property type="molecule type" value="Genomic_DNA"/>
</dbReference>
<dbReference type="RefSeq" id="WP_000985472.1">
    <property type="nucleotide sequence ID" value="NC_002953.3"/>
</dbReference>
<dbReference type="SMR" id="Q6G774"/>
<dbReference type="GeneID" id="98346559"/>
<dbReference type="KEGG" id="sas:SAS2138"/>
<dbReference type="HOGENOM" id="CLU_036235_2_1_9"/>
<dbReference type="GO" id="GO:0015934">
    <property type="term" value="C:large ribosomal subunit"/>
    <property type="evidence" value="ECO:0007669"/>
    <property type="project" value="InterPro"/>
</dbReference>
<dbReference type="GO" id="GO:0019843">
    <property type="term" value="F:rRNA binding"/>
    <property type="evidence" value="ECO:0007669"/>
    <property type="project" value="UniProtKB-UniRule"/>
</dbReference>
<dbReference type="GO" id="GO:0003735">
    <property type="term" value="F:structural constituent of ribosome"/>
    <property type="evidence" value="ECO:0007669"/>
    <property type="project" value="InterPro"/>
</dbReference>
<dbReference type="GO" id="GO:0016740">
    <property type="term" value="F:transferase activity"/>
    <property type="evidence" value="ECO:0007669"/>
    <property type="project" value="InterPro"/>
</dbReference>
<dbReference type="GO" id="GO:0002181">
    <property type="term" value="P:cytoplasmic translation"/>
    <property type="evidence" value="ECO:0007669"/>
    <property type="project" value="TreeGrafter"/>
</dbReference>
<dbReference type="FunFam" id="2.30.30.30:FF:000001">
    <property type="entry name" value="50S ribosomal protein L2"/>
    <property type="match status" value="1"/>
</dbReference>
<dbReference type="FunFam" id="2.40.50.140:FF:000003">
    <property type="entry name" value="50S ribosomal protein L2"/>
    <property type="match status" value="1"/>
</dbReference>
<dbReference type="FunFam" id="4.10.950.10:FF:000001">
    <property type="entry name" value="50S ribosomal protein L2"/>
    <property type="match status" value="1"/>
</dbReference>
<dbReference type="Gene3D" id="2.30.30.30">
    <property type="match status" value="1"/>
</dbReference>
<dbReference type="Gene3D" id="2.40.50.140">
    <property type="entry name" value="Nucleic acid-binding proteins"/>
    <property type="match status" value="1"/>
</dbReference>
<dbReference type="Gene3D" id="4.10.950.10">
    <property type="entry name" value="Ribosomal protein L2, domain 3"/>
    <property type="match status" value="1"/>
</dbReference>
<dbReference type="HAMAP" id="MF_01320_B">
    <property type="entry name" value="Ribosomal_uL2_B"/>
    <property type="match status" value="1"/>
</dbReference>
<dbReference type="InterPro" id="IPR012340">
    <property type="entry name" value="NA-bd_OB-fold"/>
</dbReference>
<dbReference type="InterPro" id="IPR014722">
    <property type="entry name" value="Rib_uL2_dom2"/>
</dbReference>
<dbReference type="InterPro" id="IPR002171">
    <property type="entry name" value="Ribosomal_uL2"/>
</dbReference>
<dbReference type="InterPro" id="IPR005880">
    <property type="entry name" value="Ribosomal_uL2_bac/org-type"/>
</dbReference>
<dbReference type="InterPro" id="IPR022669">
    <property type="entry name" value="Ribosomal_uL2_C"/>
</dbReference>
<dbReference type="InterPro" id="IPR022671">
    <property type="entry name" value="Ribosomal_uL2_CS"/>
</dbReference>
<dbReference type="InterPro" id="IPR014726">
    <property type="entry name" value="Ribosomal_uL2_dom3"/>
</dbReference>
<dbReference type="InterPro" id="IPR022666">
    <property type="entry name" value="Ribosomal_uL2_RNA-bd_dom"/>
</dbReference>
<dbReference type="InterPro" id="IPR008991">
    <property type="entry name" value="Translation_prot_SH3-like_sf"/>
</dbReference>
<dbReference type="NCBIfam" id="TIGR01171">
    <property type="entry name" value="rplB_bact"/>
    <property type="match status" value="1"/>
</dbReference>
<dbReference type="PANTHER" id="PTHR13691:SF5">
    <property type="entry name" value="LARGE RIBOSOMAL SUBUNIT PROTEIN UL2M"/>
    <property type="match status" value="1"/>
</dbReference>
<dbReference type="PANTHER" id="PTHR13691">
    <property type="entry name" value="RIBOSOMAL PROTEIN L2"/>
    <property type="match status" value="1"/>
</dbReference>
<dbReference type="Pfam" id="PF00181">
    <property type="entry name" value="Ribosomal_L2"/>
    <property type="match status" value="1"/>
</dbReference>
<dbReference type="Pfam" id="PF03947">
    <property type="entry name" value="Ribosomal_L2_C"/>
    <property type="match status" value="1"/>
</dbReference>
<dbReference type="PIRSF" id="PIRSF002158">
    <property type="entry name" value="Ribosomal_L2"/>
    <property type="match status" value="1"/>
</dbReference>
<dbReference type="SMART" id="SM01383">
    <property type="entry name" value="Ribosomal_L2"/>
    <property type="match status" value="1"/>
</dbReference>
<dbReference type="SMART" id="SM01382">
    <property type="entry name" value="Ribosomal_L2_C"/>
    <property type="match status" value="1"/>
</dbReference>
<dbReference type="SUPFAM" id="SSF50249">
    <property type="entry name" value="Nucleic acid-binding proteins"/>
    <property type="match status" value="1"/>
</dbReference>
<dbReference type="SUPFAM" id="SSF50104">
    <property type="entry name" value="Translation proteins SH3-like domain"/>
    <property type="match status" value="1"/>
</dbReference>
<dbReference type="PROSITE" id="PS00467">
    <property type="entry name" value="RIBOSOMAL_L2"/>
    <property type="match status" value="1"/>
</dbReference>
<keyword id="KW-0687">Ribonucleoprotein</keyword>
<keyword id="KW-0689">Ribosomal protein</keyword>
<keyword id="KW-0694">RNA-binding</keyword>
<keyword id="KW-0699">rRNA-binding</keyword>
<proteinExistence type="inferred from homology"/>
<gene>
    <name evidence="1" type="primary">rplB</name>
    <name type="ordered locus">SAS2138</name>
</gene>
<accession>Q6G774</accession>
<reference key="1">
    <citation type="journal article" date="2004" name="Proc. Natl. Acad. Sci. U.S.A.">
        <title>Complete genomes of two clinical Staphylococcus aureus strains: evidence for the rapid evolution of virulence and drug resistance.</title>
        <authorList>
            <person name="Holden M.T.G."/>
            <person name="Feil E.J."/>
            <person name="Lindsay J.A."/>
            <person name="Peacock S.J."/>
            <person name="Day N.P.J."/>
            <person name="Enright M.C."/>
            <person name="Foster T.J."/>
            <person name="Moore C.E."/>
            <person name="Hurst L."/>
            <person name="Atkin R."/>
            <person name="Barron A."/>
            <person name="Bason N."/>
            <person name="Bentley S.D."/>
            <person name="Chillingworth C."/>
            <person name="Chillingworth T."/>
            <person name="Churcher C."/>
            <person name="Clark L."/>
            <person name="Corton C."/>
            <person name="Cronin A."/>
            <person name="Doggett J."/>
            <person name="Dowd L."/>
            <person name="Feltwell T."/>
            <person name="Hance Z."/>
            <person name="Harris B."/>
            <person name="Hauser H."/>
            <person name="Holroyd S."/>
            <person name="Jagels K."/>
            <person name="James K.D."/>
            <person name="Lennard N."/>
            <person name="Line A."/>
            <person name="Mayes R."/>
            <person name="Moule S."/>
            <person name="Mungall K."/>
            <person name="Ormond D."/>
            <person name="Quail M.A."/>
            <person name="Rabbinowitsch E."/>
            <person name="Rutherford K.M."/>
            <person name="Sanders M."/>
            <person name="Sharp S."/>
            <person name="Simmonds M."/>
            <person name="Stevens K."/>
            <person name="Whitehead S."/>
            <person name="Barrell B.G."/>
            <person name="Spratt B.G."/>
            <person name="Parkhill J."/>
        </authorList>
    </citation>
    <scope>NUCLEOTIDE SEQUENCE [LARGE SCALE GENOMIC DNA]</scope>
    <source>
        <strain>MSSA476</strain>
    </source>
</reference>
<evidence type="ECO:0000255" key="1">
    <source>
        <dbReference type="HAMAP-Rule" id="MF_01320"/>
    </source>
</evidence>
<evidence type="ECO:0000256" key="2">
    <source>
        <dbReference type="SAM" id="MobiDB-lite"/>
    </source>
</evidence>
<evidence type="ECO:0000305" key="3"/>
<sequence length="277" mass="30155">MAIKKYKPITNGRRNMTSLDFAEITKTTPEKSLLKPLPKKAGRNNQGKLTVRHHGGGHKRQYRVIDFKRNKDGINAKVDSIQYDPNRSANIALVVYADGEKRYIIAPKGLEVGQIVESGAEADIKVGNALPLQNIPVGTVVHNIELKPGKGGQIARSAGASAQVLGKEGKYVLIRLRSGEVRMILSTCRATIGQVGNLQHELVNVGKAGRSRWKGIRPTVRGSVMNPNDHPHGGGEGRAPIGRPSPMSPWGKPTLGKKTRRGKKSSDKLIVRGRKKK</sequence>
<name>RL2_STAAS</name>
<protein>
    <recommendedName>
        <fullName evidence="1">Large ribosomal subunit protein uL2</fullName>
    </recommendedName>
    <alternativeName>
        <fullName evidence="3">50S ribosomal protein L2</fullName>
    </alternativeName>
</protein>
<organism>
    <name type="scientific">Staphylococcus aureus (strain MSSA476)</name>
    <dbReference type="NCBI Taxonomy" id="282459"/>
    <lineage>
        <taxon>Bacteria</taxon>
        <taxon>Bacillati</taxon>
        <taxon>Bacillota</taxon>
        <taxon>Bacilli</taxon>
        <taxon>Bacillales</taxon>
        <taxon>Staphylococcaceae</taxon>
        <taxon>Staphylococcus</taxon>
    </lineage>
</organism>
<feature type="chain" id="PRO_0000129618" description="Large ribosomal subunit protein uL2">
    <location>
        <begin position="1"/>
        <end position="277"/>
    </location>
</feature>
<feature type="region of interest" description="Disordered" evidence="2">
    <location>
        <begin position="36"/>
        <end position="55"/>
    </location>
</feature>
<feature type="region of interest" description="Disordered" evidence="2">
    <location>
        <begin position="213"/>
        <end position="277"/>
    </location>
</feature>
<comment type="function">
    <text evidence="1">One of the primary rRNA binding proteins. Required for association of the 30S and 50S subunits to form the 70S ribosome, for tRNA binding and peptide bond formation. It has been suggested to have peptidyltransferase activity; this is somewhat controversial. Makes several contacts with the 16S rRNA in the 70S ribosome.</text>
</comment>
<comment type="subunit">
    <text evidence="1">Part of the 50S ribosomal subunit. Forms a bridge to the 30S subunit in the 70S ribosome.</text>
</comment>
<comment type="similarity">
    <text evidence="1">Belongs to the universal ribosomal protein uL2 family.</text>
</comment>